<dbReference type="EC" id="1.2.1.70"/>
<dbReference type="EMBL" id="D88383">
    <property type="protein sequence ID" value="BAA25168.1"/>
    <property type="molecule type" value="mRNA"/>
</dbReference>
<dbReference type="PIR" id="T04402">
    <property type="entry name" value="T04402"/>
</dbReference>
<dbReference type="SMR" id="O65796"/>
<dbReference type="UniPathway" id="UPA00251">
    <property type="reaction ID" value="UER00316"/>
</dbReference>
<dbReference type="ExpressionAtlas" id="O65796">
    <property type="expression patterns" value="baseline and differential"/>
</dbReference>
<dbReference type="GO" id="GO:0009507">
    <property type="term" value="C:chloroplast"/>
    <property type="evidence" value="ECO:0007669"/>
    <property type="project" value="UniProtKB-SubCell"/>
</dbReference>
<dbReference type="GO" id="GO:0008883">
    <property type="term" value="F:glutamyl-tRNA reductase activity"/>
    <property type="evidence" value="ECO:0007669"/>
    <property type="project" value="UniProtKB-EC"/>
</dbReference>
<dbReference type="GO" id="GO:0050661">
    <property type="term" value="F:NADP binding"/>
    <property type="evidence" value="ECO:0007669"/>
    <property type="project" value="InterPro"/>
</dbReference>
<dbReference type="GO" id="GO:0015995">
    <property type="term" value="P:chlorophyll biosynthetic process"/>
    <property type="evidence" value="ECO:0007669"/>
    <property type="project" value="UniProtKB-KW"/>
</dbReference>
<dbReference type="GO" id="GO:0006782">
    <property type="term" value="P:protoporphyrinogen IX biosynthetic process"/>
    <property type="evidence" value="ECO:0007669"/>
    <property type="project" value="UniProtKB-UniPathway"/>
</dbReference>
<dbReference type="CDD" id="cd05213">
    <property type="entry name" value="NAD_bind_Glutamyl_tRNA_reduct"/>
    <property type="match status" value="1"/>
</dbReference>
<dbReference type="FunFam" id="3.30.460.30:FF:000001">
    <property type="entry name" value="Glutamyl-tRNA reductase"/>
    <property type="match status" value="1"/>
</dbReference>
<dbReference type="FunFam" id="3.40.50.720:FF:000031">
    <property type="entry name" value="Glutamyl-tRNA reductase"/>
    <property type="match status" value="1"/>
</dbReference>
<dbReference type="Gene3D" id="3.30.460.30">
    <property type="entry name" value="Glutamyl-tRNA reductase, N-terminal domain"/>
    <property type="match status" value="1"/>
</dbReference>
<dbReference type="Gene3D" id="3.40.50.720">
    <property type="entry name" value="NAD(P)-binding Rossmann-like Domain"/>
    <property type="match status" value="1"/>
</dbReference>
<dbReference type="HAMAP" id="MF_00087">
    <property type="entry name" value="Glu_tRNA_reductase"/>
    <property type="match status" value="1"/>
</dbReference>
<dbReference type="InterPro" id="IPR000343">
    <property type="entry name" value="4pyrrol_synth_GluRdtase"/>
</dbReference>
<dbReference type="InterPro" id="IPR015896">
    <property type="entry name" value="4pyrrol_synth_GluRdtase_dimer"/>
</dbReference>
<dbReference type="InterPro" id="IPR015895">
    <property type="entry name" value="4pyrrol_synth_GluRdtase_N"/>
</dbReference>
<dbReference type="InterPro" id="IPR018214">
    <property type="entry name" value="GluRdtase_CS"/>
</dbReference>
<dbReference type="InterPro" id="IPR036453">
    <property type="entry name" value="GluRdtase_dimer_dom_sf"/>
</dbReference>
<dbReference type="InterPro" id="IPR036343">
    <property type="entry name" value="GluRdtase_N_sf"/>
</dbReference>
<dbReference type="InterPro" id="IPR036291">
    <property type="entry name" value="NAD(P)-bd_dom_sf"/>
</dbReference>
<dbReference type="InterPro" id="IPR006151">
    <property type="entry name" value="Shikm_DH/Glu-tRNA_Rdtase"/>
</dbReference>
<dbReference type="NCBIfam" id="TIGR01035">
    <property type="entry name" value="hemA"/>
    <property type="match status" value="1"/>
</dbReference>
<dbReference type="PANTHER" id="PTHR43120:SF7">
    <property type="entry name" value="GLUTAMYL-TRNA REDUCTASE"/>
    <property type="match status" value="1"/>
</dbReference>
<dbReference type="PANTHER" id="PTHR43120">
    <property type="entry name" value="GLUTAMYL-TRNA REDUCTASE 1, CHLOROPLASTIC"/>
    <property type="match status" value="1"/>
</dbReference>
<dbReference type="Pfam" id="PF00745">
    <property type="entry name" value="GlutR_dimer"/>
    <property type="match status" value="1"/>
</dbReference>
<dbReference type="Pfam" id="PF05201">
    <property type="entry name" value="GlutR_N"/>
    <property type="match status" value="1"/>
</dbReference>
<dbReference type="Pfam" id="PF01488">
    <property type="entry name" value="Shikimate_DH"/>
    <property type="match status" value="1"/>
</dbReference>
<dbReference type="SUPFAM" id="SSF69742">
    <property type="entry name" value="Glutamyl tRNA-reductase catalytic, N-terminal domain"/>
    <property type="match status" value="1"/>
</dbReference>
<dbReference type="SUPFAM" id="SSF69075">
    <property type="entry name" value="Glutamyl tRNA-reductase dimerization domain"/>
    <property type="match status" value="1"/>
</dbReference>
<dbReference type="SUPFAM" id="SSF51735">
    <property type="entry name" value="NAD(P)-binding Rossmann-fold domains"/>
    <property type="match status" value="1"/>
</dbReference>
<dbReference type="PROSITE" id="PS00747">
    <property type="entry name" value="GLUTR"/>
    <property type="match status" value="1"/>
</dbReference>
<proteinExistence type="evidence at transcript level"/>
<keyword id="KW-0149">Chlorophyll biosynthesis</keyword>
<keyword id="KW-0150">Chloroplast</keyword>
<keyword id="KW-0521">NADP</keyword>
<keyword id="KW-0560">Oxidoreductase</keyword>
<keyword id="KW-0934">Plastid</keyword>
<keyword id="KW-0627">Porphyrin biosynthesis</keyword>
<keyword id="KW-0809">Transit peptide</keyword>
<feature type="transit peptide" description="Chloroplast" evidence="2">
    <location>
        <begin position="1"/>
        <end status="unknown"/>
    </location>
</feature>
<feature type="chain" id="PRO_0000013312" description="Glutamyl-tRNA reductase 3, chloroplastic">
    <location>
        <begin status="unknown"/>
        <end position="535"/>
    </location>
</feature>
<feature type="active site" description="Nucleophile" evidence="1">
    <location>
        <position position="131"/>
    </location>
</feature>
<feature type="binding site" evidence="1">
    <location>
        <begin position="131"/>
        <end position="133"/>
    </location>
    <ligand>
        <name>substrate</name>
    </ligand>
</feature>
<feature type="binding site" evidence="1">
    <location>
        <position position="190"/>
    </location>
    <ligand>
        <name>substrate</name>
    </ligand>
</feature>
<feature type="binding site" evidence="1">
    <location>
        <begin position="195"/>
        <end position="197"/>
    </location>
    <ligand>
        <name>substrate</name>
    </ligand>
</feature>
<feature type="binding site" evidence="1">
    <location>
        <position position="201"/>
    </location>
    <ligand>
        <name>substrate</name>
    </ligand>
</feature>
<feature type="binding site" evidence="1">
    <location>
        <begin position="272"/>
        <end position="277"/>
    </location>
    <ligand>
        <name>NADP(+)</name>
        <dbReference type="ChEBI" id="CHEBI:58349"/>
    </ligand>
</feature>
<feature type="site" description="Important for activity" evidence="1">
    <location>
        <position position="180"/>
    </location>
</feature>
<comment type="function">
    <text evidence="1">Catalyzes the NADPH-dependent reduction of glutamyl-tRNA(Glu) to glutamate 1-semialdehyde (GSA).</text>
</comment>
<comment type="catalytic activity">
    <reaction>
        <text>(S)-4-amino-5-oxopentanoate + tRNA(Glu) + NADP(+) = L-glutamyl-tRNA(Glu) + NADPH + H(+)</text>
        <dbReference type="Rhea" id="RHEA:12344"/>
        <dbReference type="Rhea" id="RHEA-COMP:9663"/>
        <dbReference type="Rhea" id="RHEA-COMP:9680"/>
        <dbReference type="ChEBI" id="CHEBI:15378"/>
        <dbReference type="ChEBI" id="CHEBI:57501"/>
        <dbReference type="ChEBI" id="CHEBI:57783"/>
        <dbReference type="ChEBI" id="CHEBI:58349"/>
        <dbReference type="ChEBI" id="CHEBI:78442"/>
        <dbReference type="ChEBI" id="CHEBI:78520"/>
        <dbReference type="EC" id="1.2.1.70"/>
    </reaction>
</comment>
<comment type="pathway">
    <text>Porphyrin-containing compound metabolism; protoporphyrin-IX biosynthesis; 5-aminolevulinate from L-glutamyl-tRNA(Glu): step 1/2.</text>
</comment>
<comment type="subcellular location">
    <subcellularLocation>
        <location>Plastid</location>
        <location>Chloroplast</location>
    </subcellularLocation>
</comment>
<comment type="tissue specificity">
    <text>Primarily expressed in roots.</text>
</comment>
<comment type="miscellaneous">
    <text evidence="1">During catalysis, the active site Cys acts as a nucleophile attacking the alpha-carbonyl group of tRNA-bound glutamate with the formation of a thioester intermediate between enzyme and glutamate, and the concomitant release of tRNA(Glu). The thioester intermediate is finally reduced by direct hydride transfer from NADPH, to form the product GSA (By similarity).</text>
</comment>
<comment type="similarity">
    <text evidence="3">Belongs to the glutamyl-tRNA reductase family.</text>
</comment>
<gene>
    <name type="primary">HEMA3</name>
</gene>
<organism>
    <name type="scientific">Hordeum vulgare</name>
    <name type="common">Barley</name>
    <dbReference type="NCBI Taxonomy" id="4513"/>
    <lineage>
        <taxon>Eukaryota</taxon>
        <taxon>Viridiplantae</taxon>
        <taxon>Streptophyta</taxon>
        <taxon>Embryophyta</taxon>
        <taxon>Tracheophyta</taxon>
        <taxon>Spermatophyta</taxon>
        <taxon>Magnoliopsida</taxon>
        <taxon>Liliopsida</taxon>
        <taxon>Poales</taxon>
        <taxon>Poaceae</taxon>
        <taxon>BOP clade</taxon>
        <taxon>Pooideae</taxon>
        <taxon>Triticodae</taxon>
        <taxon>Triticeae</taxon>
        <taxon>Hordeinae</taxon>
        <taxon>Hordeum</taxon>
    </lineage>
</organism>
<reference key="1">
    <citation type="journal article" date="1997" name="Photosyn. Res.">
        <title>The third member of the hemA gene family encoding glutamyl-tRNA reductase is primarily expressed in roots in Hordeum vulgare.</title>
        <authorList>
            <person name="Tanaka R."/>
            <person name="Yoshida K."/>
            <person name="Nakayashiki T."/>
            <person name="Tsuji H."/>
            <person name="Inokuchi H."/>
            <person name="Okada K."/>
            <person name="Tanaka A."/>
        </authorList>
    </citation>
    <scope>NUCLEOTIDE SEQUENCE [MRNA]</scope>
    <source>
        <strain>cv. Bonus</strain>
        <tissue>Root</tissue>
    </source>
</reference>
<name>HEM13_HORVU</name>
<accession>O65796</accession>
<evidence type="ECO:0000250" key="1"/>
<evidence type="ECO:0000255" key="2"/>
<evidence type="ECO:0000305" key="3"/>
<sequence length="535" mass="58419">MASTSTASATAMAGAFAAAGVNKPRGSAACPRVPAGGRQRLSCVVRCDAGPGVPAQMAAMAASVAALEQFKISADRYMKEKSSIAVIGLSIHTAPVEMREKLAVAEELWPRAVAELTNLNHIEKAAVLSPCNRMEIYVVALSWNRGIREIVDWMSMKSGIPAVELREHLFMFRDSDATRHLFEVSSGLDSLVLGEGQILAQVKQVVRSGQNSGGLGKNIDRMFKDAITAGKRVRSETNISCGAVSVSSAAVELALMKLPKSECLSARMLLIGAGKMGRLVAKHLAAKGCKKVVIVNRSVERVDAIREEMQGIEIVYRSLTEMYEAAADADVVFTSTSSESPLFTKEHAEALPPVSGALGGVRLFVDISVPRNVSACVSDVGHARVYNVDDLKEVVEANKEDRLRKAMEAQTIISEELKRFEAWRDSMETVPTIKKLRSYADRVRASELDKCLQKIGEDALTKKMRRSIEQLSTGIVNRLLHGPLQHLRCDGTDNRTLDETLENMHALNRMFGLDTEKAVMEQKIKTKVEKQKTQN</sequence>
<protein>
    <recommendedName>
        <fullName>Glutamyl-tRNA reductase 3, chloroplastic</fullName>
        <shortName>GluTR</shortName>
        <ecNumber>1.2.1.70</ecNumber>
    </recommendedName>
</protein>